<protein>
    <recommendedName>
        <fullName evidence="1">UPF0391 membrane protein Noc_0484</fullName>
    </recommendedName>
</protein>
<evidence type="ECO:0000255" key="1">
    <source>
        <dbReference type="HAMAP-Rule" id="MF_01361"/>
    </source>
</evidence>
<dbReference type="EMBL" id="CP000127">
    <property type="protein sequence ID" value="ABA57007.1"/>
    <property type="molecule type" value="Genomic_DNA"/>
</dbReference>
<dbReference type="RefSeq" id="WP_002813183.1">
    <property type="nucleotide sequence ID" value="NC_007484.1"/>
</dbReference>
<dbReference type="STRING" id="323261.Noc_0484"/>
<dbReference type="KEGG" id="noc:Noc_0484"/>
<dbReference type="eggNOG" id="COG5487">
    <property type="taxonomic scope" value="Bacteria"/>
</dbReference>
<dbReference type="HOGENOM" id="CLU_187346_2_1_6"/>
<dbReference type="InParanoid" id="Q3JDT9"/>
<dbReference type="Proteomes" id="UP000006838">
    <property type="component" value="Chromosome"/>
</dbReference>
<dbReference type="GO" id="GO:0005886">
    <property type="term" value="C:plasma membrane"/>
    <property type="evidence" value="ECO:0007669"/>
    <property type="project" value="UniProtKB-SubCell"/>
</dbReference>
<dbReference type="HAMAP" id="MF_01361">
    <property type="entry name" value="UPF0391"/>
    <property type="match status" value="1"/>
</dbReference>
<dbReference type="InterPro" id="IPR009760">
    <property type="entry name" value="DUF1328"/>
</dbReference>
<dbReference type="NCBIfam" id="NF010229">
    <property type="entry name" value="PRK13682.1-4"/>
    <property type="match status" value="1"/>
</dbReference>
<dbReference type="Pfam" id="PF07043">
    <property type="entry name" value="DUF1328"/>
    <property type="match status" value="1"/>
</dbReference>
<dbReference type="PIRSF" id="PIRSF036466">
    <property type="entry name" value="UCP036466"/>
    <property type="match status" value="1"/>
</dbReference>
<gene>
    <name type="ordered locus">Noc_0484</name>
</gene>
<feature type="chain" id="PRO_0000256753" description="UPF0391 membrane protein Noc_0484">
    <location>
        <begin position="1"/>
        <end position="56"/>
    </location>
</feature>
<feature type="transmembrane region" description="Helical" evidence="1">
    <location>
        <begin position="6"/>
        <end position="26"/>
    </location>
</feature>
<feature type="transmembrane region" description="Helical" evidence="1">
    <location>
        <begin position="29"/>
        <end position="49"/>
    </location>
</feature>
<name>Y484_NITOC</name>
<proteinExistence type="inferred from homology"/>
<sequence length="56" mass="6000">MFGWAVTFLIVALVAALLGFTGIAGIATEIAWILFVVGIILFVVFLVLGRRGRPPL</sequence>
<accession>Q3JDT9</accession>
<keyword id="KW-1003">Cell membrane</keyword>
<keyword id="KW-0472">Membrane</keyword>
<keyword id="KW-1185">Reference proteome</keyword>
<keyword id="KW-0812">Transmembrane</keyword>
<keyword id="KW-1133">Transmembrane helix</keyword>
<reference key="1">
    <citation type="journal article" date="2006" name="Appl. Environ. Microbiol.">
        <title>Complete genome sequence of the marine, chemolithoautotrophic, ammonia-oxidizing bacterium Nitrosococcus oceani ATCC 19707.</title>
        <authorList>
            <person name="Klotz M.G."/>
            <person name="Arp D.J."/>
            <person name="Chain P.S.G."/>
            <person name="El-Sheikh A.F."/>
            <person name="Hauser L.J."/>
            <person name="Hommes N.G."/>
            <person name="Larimer F.W."/>
            <person name="Malfatti S.A."/>
            <person name="Norton J.M."/>
            <person name="Poret-Peterson A.T."/>
            <person name="Vergez L.M."/>
            <person name="Ward B.B."/>
        </authorList>
    </citation>
    <scope>NUCLEOTIDE SEQUENCE [LARGE SCALE GENOMIC DNA]</scope>
    <source>
        <strain>ATCC 19707 / BCRC 17464 / JCM 30415 / NCIMB 11848 / C-107</strain>
    </source>
</reference>
<comment type="subcellular location">
    <subcellularLocation>
        <location evidence="1">Cell membrane</location>
        <topology evidence="1">Multi-pass membrane protein</topology>
    </subcellularLocation>
</comment>
<comment type="similarity">
    <text evidence="1">Belongs to the UPF0391 family.</text>
</comment>
<organism>
    <name type="scientific">Nitrosococcus oceani (strain ATCC 19707 / BCRC 17464 / JCM 30415 / NCIMB 11848 / C-107)</name>
    <dbReference type="NCBI Taxonomy" id="323261"/>
    <lineage>
        <taxon>Bacteria</taxon>
        <taxon>Pseudomonadati</taxon>
        <taxon>Pseudomonadota</taxon>
        <taxon>Gammaproteobacteria</taxon>
        <taxon>Chromatiales</taxon>
        <taxon>Chromatiaceae</taxon>
        <taxon>Nitrosococcus</taxon>
    </lineage>
</organism>